<proteinExistence type="evidence at transcript level"/>
<sequence>MVHFTAEEKAAITSLWGKMNVEEAGGEALGRLLVVYPWTQRFFDNFGNLSSPSAILGNPKVKAHGKKVLTSFGDAIKNMDNLKTTFAKLSELHCDKLHVDPENFRLLGNVMVIILATHFGKEFTPEVQAAWQKLVSAVAIALGHKYH</sequence>
<protein>
    <recommendedName>
        <fullName>Hemoglobin subunit epsilon</fullName>
    </recommendedName>
    <alternativeName>
        <fullName>Epsilon-globin</fullName>
    </alternativeName>
    <alternativeName>
        <fullName>Hemoglobin epsilon chain</fullName>
    </alternativeName>
</protein>
<organism>
    <name type="scientific">Alouatta belzebul</name>
    <name type="common">Red-handed howler monkey</name>
    <dbReference type="NCBI Taxonomy" id="30590"/>
    <lineage>
        <taxon>Eukaryota</taxon>
        <taxon>Metazoa</taxon>
        <taxon>Chordata</taxon>
        <taxon>Craniata</taxon>
        <taxon>Vertebrata</taxon>
        <taxon>Euteleostomi</taxon>
        <taxon>Mammalia</taxon>
        <taxon>Eutheria</taxon>
        <taxon>Euarchontoglires</taxon>
        <taxon>Primates</taxon>
        <taxon>Haplorrhini</taxon>
        <taxon>Platyrrhini</taxon>
        <taxon>Atelidae</taxon>
        <taxon>Alouattinae</taxon>
        <taxon>Alouatta</taxon>
    </lineage>
</organism>
<feature type="chain" id="PRO_0000053184" description="Hemoglobin subunit epsilon">
    <location>
        <begin position="1"/>
        <end position="147"/>
    </location>
</feature>
<feature type="domain" description="Globin" evidence="2">
    <location>
        <begin position="3"/>
        <end position="147"/>
    </location>
</feature>
<feature type="binding site" description="distal binding residue" evidence="2">
    <location>
        <position position="64"/>
    </location>
    <ligand>
        <name>heme b</name>
        <dbReference type="ChEBI" id="CHEBI:60344"/>
    </ligand>
    <ligandPart>
        <name>Fe</name>
        <dbReference type="ChEBI" id="CHEBI:18248"/>
    </ligandPart>
</feature>
<feature type="binding site" description="proximal binding residue" evidence="2">
    <location>
        <position position="93"/>
    </location>
    <ligand>
        <name>heme b</name>
        <dbReference type="ChEBI" id="CHEBI:60344"/>
    </ligand>
    <ligandPart>
        <name>Fe</name>
        <dbReference type="ChEBI" id="CHEBI:18248"/>
    </ligandPart>
</feature>
<feature type="modified residue" description="Phosphoserine" evidence="1">
    <location>
        <position position="14"/>
    </location>
</feature>
<feature type="modified residue" description="Phosphoserine" evidence="1">
    <location>
        <position position="51"/>
    </location>
</feature>
<evidence type="ECO:0000250" key="1">
    <source>
        <dbReference type="UniProtKB" id="P02100"/>
    </source>
</evidence>
<evidence type="ECO:0000255" key="2">
    <source>
        <dbReference type="PROSITE-ProRule" id="PRU00238"/>
    </source>
</evidence>
<reference key="1">
    <citation type="journal article" date="1993" name="Mol. Phylogenet. Evol.">
        <title>Molecular phylogeny of the New World monkeys (Platyrrhini, primates).</title>
        <authorList>
            <person name="Schneider H."/>
            <person name="Schneider M.P.C."/>
            <person name="Sampaio I."/>
            <person name="Harada M.L."/>
            <person name="Stanhope M.J."/>
            <person name="Czekysbuaj J."/>
            <person name="Goodman M."/>
        </authorList>
    </citation>
    <scope>NUCLEOTIDE SEQUENCE [GENOMIC DNA]</scope>
    <source>
        <tissue>Lymphocyte</tissue>
    </source>
</reference>
<name>HBE_ALOBE</name>
<comment type="function">
    <text>The epsilon chain is a beta-type chain of early mammalian embryonic hemoglobin.</text>
</comment>
<comment type="subunit">
    <text>Heterotetramer of two alpha chains and two epsilon chains in early embryonic hemoglobin Gower-2; two zeta chains and two epsilon chains in early embryonic hemoglobin Gower-1.</text>
</comment>
<comment type="tissue specificity">
    <text>Red blood cells.</text>
</comment>
<comment type="similarity">
    <text evidence="2">Belongs to the globin family.</text>
</comment>
<keyword id="KW-0349">Heme</keyword>
<keyword id="KW-0408">Iron</keyword>
<keyword id="KW-0479">Metal-binding</keyword>
<keyword id="KW-0561">Oxygen transport</keyword>
<keyword id="KW-0597">Phosphoprotein</keyword>
<keyword id="KW-0813">Transport</keyword>
<dbReference type="EMBL" id="L25370">
    <property type="protein sequence ID" value="AAA35371.1"/>
    <property type="molecule type" value="Genomic_DNA"/>
</dbReference>
<dbReference type="SMR" id="P68017"/>
<dbReference type="GO" id="GO:0072562">
    <property type="term" value="C:blood microparticle"/>
    <property type="evidence" value="ECO:0007669"/>
    <property type="project" value="TreeGrafter"/>
</dbReference>
<dbReference type="GO" id="GO:0031838">
    <property type="term" value="C:haptoglobin-hemoglobin complex"/>
    <property type="evidence" value="ECO:0007669"/>
    <property type="project" value="TreeGrafter"/>
</dbReference>
<dbReference type="GO" id="GO:0005833">
    <property type="term" value="C:hemoglobin complex"/>
    <property type="evidence" value="ECO:0007669"/>
    <property type="project" value="InterPro"/>
</dbReference>
<dbReference type="GO" id="GO:0031720">
    <property type="term" value="F:haptoglobin binding"/>
    <property type="evidence" value="ECO:0007669"/>
    <property type="project" value="TreeGrafter"/>
</dbReference>
<dbReference type="GO" id="GO:0020037">
    <property type="term" value="F:heme binding"/>
    <property type="evidence" value="ECO:0007669"/>
    <property type="project" value="InterPro"/>
</dbReference>
<dbReference type="GO" id="GO:0031721">
    <property type="term" value="F:hemoglobin alpha binding"/>
    <property type="evidence" value="ECO:0007669"/>
    <property type="project" value="TreeGrafter"/>
</dbReference>
<dbReference type="GO" id="GO:0046872">
    <property type="term" value="F:metal ion binding"/>
    <property type="evidence" value="ECO:0007669"/>
    <property type="project" value="UniProtKB-KW"/>
</dbReference>
<dbReference type="GO" id="GO:0043177">
    <property type="term" value="F:organic acid binding"/>
    <property type="evidence" value="ECO:0007669"/>
    <property type="project" value="TreeGrafter"/>
</dbReference>
<dbReference type="GO" id="GO:0019825">
    <property type="term" value="F:oxygen binding"/>
    <property type="evidence" value="ECO:0007669"/>
    <property type="project" value="InterPro"/>
</dbReference>
<dbReference type="GO" id="GO:0005344">
    <property type="term" value="F:oxygen carrier activity"/>
    <property type="evidence" value="ECO:0007669"/>
    <property type="project" value="UniProtKB-KW"/>
</dbReference>
<dbReference type="GO" id="GO:0004601">
    <property type="term" value="F:peroxidase activity"/>
    <property type="evidence" value="ECO:0007669"/>
    <property type="project" value="TreeGrafter"/>
</dbReference>
<dbReference type="GO" id="GO:0042744">
    <property type="term" value="P:hydrogen peroxide catabolic process"/>
    <property type="evidence" value="ECO:0007669"/>
    <property type="project" value="TreeGrafter"/>
</dbReference>
<dbReference type="CDD" id="cd08925">
    <property type="entry name" value="Hb-beta-like"/>
    <property type="match status" value="1"/>
</dbReference>
<dbReference type="FunFam" id="1.10.490.10:FF:000001">
    <property type="entry name" value="Hemoglobin subunit beta"/>
    <property type="match status" value="1"/>
</dbReference>
<dbReference type="Gene3D" id="1.10.490.10">
    <property type="entry name" value="Globins"/>
    <property type="match status" value="1"/>
</dbReference>
<dbReference type="InterPro" id="IPR000971">
    <property type="entry name" value="Globin"/>
</dbReference>
<dbReference type="InterPro" id="IPR009050">
    <property type="entry name" value="Globin-like_sf"/>
</dbReference>
<dbReference type="InterPro" id="IPR012292">
    <property type="entry name" value="Globin/Proto"/>
</dbReference>
<dbReference type="InterPro" id="IPR002337">
    <property type="entry name" value="Hemoglobin_b"/>
</dbReference>
<dbReference type="InterPro" id="IPR050056">
    <property type="entry name" value="Hemoglobin_oxygen_transport"/>
</dbReference>
<dbReference type="PANTHER" id="PTHR11442">
    <property type="entry name" value="HEMOGLOBIN FAMILY MEMBER"/>
    <property type="match status" value="1"/>
</dbReference>
<dbReference type="PANTHER" id="PTHR11442:SF7">
    <property type="entry name" value="HEMOGLOBIN SUBUNIT EPSILON"/>
    <property type="match status" value="1"/>
</dbReference>
<dbReference type="Pfam" id="PF00042">
    <property type="entry name" value="Globin"/>
    <property type="match status" value="1"/>
</dbReference>
<dbReference type="PRINTS" id="PR00814">
    <property type="entry name" value="BETAHAEM"/>
</dbReference>
<dbReference type="SUPFAM" id="SSF46458">
    <property type="entry name" value="Globin-like"/>
    <property type="match status" value="1"/>
</dbReference>
<dbReference type="PROSITE" id="PS01033">
    <property type="entry name" value="GLOBIN"/>
    <property type="match status" value="1"/>
</dbReference>
<gene>
    <name type="primary">HBE1</name>
</gene>
<accession>P68017</accession>
<accession>P43350</accession>